<comment type="function">
    <text>This protein is a positive regulator for the phosphate regulon. Transcription of this operon is positively regulated by PhoB and PhoR when phosphate is limited.</text>
</comment>
<comment type="subcellular location">
    <subcellularLocation>
        <location>Cytoplasm</location>
    </subcellularLocation>
</comment>
<comment type="PTM">
    <text evidence="1">Phosphorylated by PhoR.</text>
</comment>
<protein>
    <recommendedName>
        <fullName>Phosphate regulon transcriptional regulatory protein PhoB</fullName>
    </recommendedName>
</protein>
<reference key="1">
    <citation type="journal article" date="1995" name="Mol. Microbiol.">
        <title>The pho regulon of Shigella flexneri.</title>
        <authorList>
            <person name="Scholten M."/>
            <person name="Janssen R."/>
            <person name="Bogaarts C."/>
            <person name="van Strien J."/>
            <person name="Tommassen J."/>
        </authorList>
    </citation>
    <scope>NUCLEOTIDE SEQUENCE [GENOMIC DNA]</scope>
    <source>
        <strain>M25-8 / Serotype 2a</strain>
    </source>
</reference>
<reference key="2">
    <citation type="journal article" date="2002" name="Nucleic Acids Res.">
        <title>Genome sequence of Shigella flexneri 2a: insights into pathogenicity through comparison with genomes of Escherichia coli K12 and O157.</title>
        <authorList>
            <person name="Jin Q."/>
            <person name="Yuan Z."/>
            <person name="Xu J."/>
            <person name="Wang Y."/>
            <person name="Shen Y."/>
            <person name="Lu W."/>
            <person name="Wang J."/>
            <person name="Liu H."/>
            <person name="Yang J."/>
            <person name="Yang F."/>
            <person name="Zhang X."/>
            <person name="Zhang J."/>
            <person name="Yang G."/>
            <person name="Wu H."/>
            <person name="Qu D."/>
            <person name="Dong J."/>
            <person name="Sun L."/>
            <person name="Xue Y."/>
            <person name="Zhao A."/>
            <person name="Gao Y."/>
            <person name="Zhu J."/>
            <person name="Kan B."/>
            <person name="Ding K."/>
            <person name="Chen S."/>
            <person name="Cheng H."/>
            <person name="Yao Z."/>
            <person name="He B."/>
            <person name="Chen R."/>
            <person name="Ma D."/>
            <person name="Qiang B."/>
            <person name="Wen Y."/>
            <person name="Hou Y."/>
            <person name="Yu J."/>
        </authorList>
    </citation>
    <scope>NUCLEOTIDE SEQUENCE [LARGE SCALE GENOMIC DNA]</scope>
    <source>
        <strain>301 / Serotype 2a</strain>
    </source>
</reference>
<reference key="3">
    <citation type="journal article" date="2003" name="Infect. Immun.">
        <title>Complete genome sequence and comparative genomics of Shigella flexneri serotype 2a strain 2457T.</title>
        <authorList>
            <person name="Wei J."/>
            <person name="Goldberg M.B."/>
            <person name="Burland V."/>
            <person name="Venkatesan M.M."/>
            <person name="Deng W."/>
            <person name="Fournier G."/>
            <person name="Mayhew G.F."/>
            <person name="Plunkett G. III"/>
            <person name="Rose D.J."/>
            <person name="Darling A."/>
            <person name="Mau B."/>
            <person name="Perna N.T."/>
            <person name="Payne S.M."/>
            <person name="Runyen-Janecky L.J."/>
            <person name="Zhou S."/>
            <person name="Schwartz D.C."/>
            <person name="Blattner F.R."/>
        </authorList>
    </citation>
    <scope>NUCLEOTIDE SEQUENCE [LARGE SCALE GENOMIC DNA]</scope>
    <source>
        <strain>ATCC 700930 / 2457T / Serotype 2a</strain>
    </source>
</reference>
<name>PHOB_SHIFL</name>
<evidence type="ECO:0000250" key="1"/>
<evidence type="ECO:0000255" key="2">
    <source>
        <dbReference type="PROSITE-ProRule" id="PRU00169"/>
    </source>
</evidence>
<evidence type="ECO:0000255" key="3">
    <source>
        <dbReference type="PROSITE-ProRule" id="PRU01091"/>
    </source>
</evidence>
<evidence type="ECO:0000305" key="4"/>
<feature type="chain" id="PRO_0000081193" description="Phosphate regulon transcriptional regulatory protein PhoB">
    <location>
        <begin position="1"/>
        <end position="229"/>
    </location>
</feature>
<feature type="domain" description="Response regulatory" evidence="2">
    <location>
        <begin position="4"/>
        <end position="120"/>
    </location>
</feature>
<feature type="DNA-binding region" description="OmpR/PhoB-type" evidence="3">
    <location>
        <begin position="129"/>
        <end position="227"/>
    </location>
</feature>
<feature type="modified residue" description="4-aspartylphosphate" evidence="2">
    <location>
        <position position="53"/>
    </location>
</feature>
<feature type="sequence conflict" description="In Ref. 1; CAA56927." evidence="4" ref="1">
    <original>N</original>
    <variation>D</variation>
    <location>
        <position position="140"/>
    </location>
</feature>
<feature type="sequence conflict" description="In Ref. 1; CAA56927." evidence="4" ref="1">
    <original>R</original>
    <variation>L</variation>
    <location>
        <position position="172"/>
    </location>
</feature>
<organism>
    <name type="scientific">Shigella flexneri</name>
    <dbReference type="NCBI Taxonomy" id="623"/>
    <lineage>
        <taxon>Bacteria</taxon>
        <taxon>Pseudomonadati</taxon>
        <taxon>Pseudomonadota</taxon>
        <taxon>Gammaproteobacteria</taxon>
        <taxon>Enterobacterales</taxon>
        <taxon>Enterobacteriaceae</taxon>
        <taxon>Shigella</taxon>
    </lineage>
</organism>
<keyword id="KW-0010">Activator</keyword>
<keyword id="KW-0963">Cytoplasm</keyword>
<keyword id="KW-0238">DNA-binding</keyword>
<keyword id="KW-0592">Phosphate transport</keyword>
<keyword id="KW-0597">Phosphoprotein</keyword>
<keyword id="KW-1185">Reference proteome</keyword>
<keyword id="KW-0804">Transcription</keyword>
<keyword id="KW-0805">Transcription regulation</keyword>
<keyword id="KW-0813">Transport</keyword>
<keyword id="KW-0902">Two-component regulatory system</keyword>
<gene>
    <name type="primary">phoB</name>
    <name type="ordered locus">SF0336</name>
    <name type="ordered locus">S0344</name>
</gene>
<sequence length="229" mass="26431">MARRILVVEDEAPIREMVCFVLEQNGFQPVEAEDYDSAVNQLNEPWPDLILLDWMLPGGSGIQFIKHLKRESMTRDIPVVMLTARGEEEDRVRGLETGADDYITKPFSPKELVARIKAVMRRISPMAVEEVIKMQGLSLNPTSHRVMAGEEPLEMGPTEFKLLHFFMTHPERVYSREQLLNHVWGTNVYVEDRTVDVHIRRLRKALEPGGHDRMVQTVRGTGYRFSTRF</sequence>
<proteinExistence type="inferred from homology"/>
<dbReference type="EMBL" id="X81000">
    <property type="protein sequence ID" value="CAA56927.1"/>
    <property type="molecule type" value="Genomic_DNA"/>
</dbReference>
<dbReference type="EMBL" id="AE005674">
    <property type="protein sequence ID" value="AAN41994.1"/>
    <property type="molecule type" value="Genomic_DNA"/>
</dbReference>
<dbReference type="EMBL" id="AE014073">
    <property type="protein sequence ID" value="AAP15872.1"/>
    <property type="molecule type" value="Genomic_DNA"/>
</dbReference>
<dbReference type="PIR" id="S61298">
    <property type="entry name" value="S61298"/>
</dbReference>
<dbReference type="RefSeq" id="NP_706287.1">
    <property type="nucleotide sequence ID" value="NC_004337.2"/>
</dbReference>
<dbReference type="RefSeq" id="WP_000113936.1">
    <property type="nucleotide sequence ID" value="NZ_QWST01000097.1"/>
</dbReference>
<dbReference type="RefSeq" id="WP_000113938.1">
    <property type="nucleotide sequence ID" value="NZ_WPGW01000023.1"/>
</dbReference>
<dbReference type="BMRB" id="P45607"/>
<dbReference type="SMR" id="P45607"/>
<dbReference type="STRING" id="198214.SF0336"/>
<dbReference type="PaxDb" id="198214-SF0336"/>
<dbReference type="GeneID" id="1027627"/>
<dbReference type="KEGG" id="sfl:SF0336"/>
<dbReference type="KEGG" id="sfx:S0344"/>
<dbReference type="PATRIC" id="fig|198214.7.peg.384"/>
<dbReference type="HOGENOM" id="CLU_000445_30_4_6"/>
<dbReference type="Proteomes" id="UP000001006">
    <property type="component" value="Chromosome"/>
</dbReference>
<dbReference type="Proteomes" id="UP000002673">
    <property type="component" value="Chromosome"/>
</dbReference>
<dbReference type="GO" id="GO:0005829">
    <property type="term" value="C:cytosol"/>
    <property type="evidence" value="ECO:0007669"/>
    <property type="project" value="TreeGrafter"/>
</dbReference>
<dbReference type="GO" id="GO:0032993">
    <property type="term" value="C:protein-DNA complex"/>
    <property type="evidence" value="ECO:0007669"/>
    <property type="project" value="TreeGrafter"/>
</dbReference>
<dbReference type="GO" id="GO:0000156">
    <property type="term" value="F:phosphorelay response regulator activity"/>
    <property type="evidence" value="ECO:0007669"/>
    <property type="project" value="InterPro"/>
</dbReference>
<dbReference type="GO" id="GO:0000976">
    <property type="term" value="F:transcription cis-regulatory region binding"/>
    <property type="evidence" value="ECO:0007669"/>
    <property type="project" value="TreeGrafter"/>
</dbReference>
<dbReference type="GO" id="GO:0006817">
    <property type="term" value="P:phosphate ion transport"/>
    <property type="evidence" value="ECO:0007669"/>
    <property type="project" value="UniProtKB-KW"/>
</dbReference>
<dbReference type="GO" id="GO:0006355">
    <property type="term" value="P:regulation of DNA-templated transcription"/>
    <property type="evidence" value="ECO:0007669"/>
    <property type="project" value="InterPro"/>
</dbReference>
<dbReference type="CDD" id="cd17618">
    <property type="entry name" value="REC_OmpR_PhoB"/>
    <property type="match status" value="1"/>
</dbReference>
<dbReference type="CDD" id="cd00383">
    <property type="entry name" value="trans_reg_C"/>
    <property type="match status" value="1"/>
</dbReference>
<dbReference type="FunFam" id="3.40.50.2300:FF:000001">
    <property type="entry name" value="DNA-binding response regulator PhoB"/>
    <property type="match status" value="1"/>
</dbReference>
<dbReference type="FunFam" id="1.10.10.10:FF:000011">
    <property type="entry name" value="Phosphate regulon transcriptional regulator PhoB"/>
    <property type="match status" value="1"/>
</dbReference>
<dbReference type="Gene3D" id="3.40.50.2300">
    <property type="match status" value="1"/>
</dbReference>
<dbReference type="Gene3D" id="6.10.250.690">
    <property type="match status" value="1"/>
</dbReference>
<dbReference type="Gene3D" id="1.10.10.10">
    <property type="entry name" value="Winged helix-like DNA-binding domain superfamily/Winged helix DNA-binding domain"/>
    <property type="match status" value="1"/>
</dbReference>
<dbReference type="InterPro" id="IPR011006">
    <property type="entry name" value="CheY-like_superfamily"/>
</dbReference>
<dbReference type="InterPro" id="IPR001867">
    <property type="entry name" value="OmpR/PhoB-type_DNA-bd"/>
</dbReference>
<dbReference type="InterPro" id="IPR011879">
    <property type="entry name" value="Sig_transdc_resp-reg_PhoB"/>
</dbReference>
<dbReference type="InterPro" id="IPR001789">
    <property type="entry name" value="Sig_transdc_resp-reg_receiver"/>
</dbReference>
<dbReference type="InterPro" id="IPR039420">
    <property type="entry name" value="WalR-like"/>
</dbReference>
<dbReference type="InterPro" id="IPR036388">
    <property type="entry name" value="WH-like_DNA-bd_sf"/>
</dbReference>
<dbReference type="NCBIfam" id="TIGR02154">
    <property type="entry name" value="PhoB"/>
    <property type="match status" value="1"/>
</dbReference>
<dbReference type="NCBIfam" id="NF007546">
    <property type="entry name" value="PRK10161.1"/>
    <property type="match status" value="1"/>
</dbReference>
<dbReference type="PANTHER" id="PTHR48111:SF40">
    <property type="entry name" value="PHOSPHATE REGULON TRANSCRIPTIONAL REGULATORY PROTEIN PHOB"/>
    <property type="match status" value="1"/>
</dbReference>
<dbReference type="PANTHER" id="PTHR48111">
    <property type="entry name" value="REGULATOR OF RPOS"/>
    <property type="match status" value="1"/>
</dbReference>
<dbReference type="Pfam" id="PF00072">
    <property type="entry name" value="Response_reg"/>
    <property type="match status" value="1"/>
</dbReference>
<dbReference type="Pfam" id="PF00486">
    <property type="entry name" value="Trans_reg_C"/>
    <property type="match status" value="1"/>
</dbReference>
<dbReference type="SMART" id="SM00448">
    <property type="entry name" value="REC"/>
    <property type="match status" value="1"/>
</dbReference>
<dbReference type="SMART" id="SM00862">
    <property type="entry name" value="Trans_reg_C"/>
    <property type="match status" value="1"/>
</dbReference>
<dbReference type="SUPFAM" id="SSF52172">
    <property type="entry name" value="CheY-like"/>
    <property type="match status" value="1"/>
</dbReference>
<dbReference type="PROSITE" id="PS51755">
    <property type="entry name" value="OMPR_PHOB"/>
    <property type="match status" value="1"/>
</dbReference>
<dbReference type="PROSITE" id="PS50110">
    <property type="entry name" value="RESPONSE_REGULATORY"/>
    <property type="match status" value="1"/>
</dbReference>
<accession>P45607</accession>